<accession>Q8JL90</accession>
<feature type="chain" id="PRO_0000048066" description="DNA-directed RNA polymerase 132 kDa polypeptide">
    <location>
        <begin position="1"/>
        <end position="1164"/>
    </location>
</feature>
<organismHost>
    <name type="scientific">Mus musculus</name>
    <name type="common">Mouse</name>
    <dbReference type="NCBI Taxonomy" id="10090"/>
</organismHost>
<proteinExistence type="inferred from homology"/>
<reference key="1">
    <citation type="journal article" date="2003" name="Virology">
        <title>The genomic sequence of Ectromelia virus, the causative agent of mousepox.</title>
        <authorList>
            <person name="Chen N."/>
            <person name="Danila M.I."/>
            <person name="Feng Z."/>
            <person name="Buller R.M."/>
            <person name="Wang C."/>
            <person name="Han X."/>
            <person name="Lefkowitz E.J."/>
            <person name="Upton C."/>
        </authorList>
    </citation>
    <scope>NUCLEOTIDE SEQUENCE [LARGE SCALE GENOMIC DNA]</scope>
</reference>
<gene>
    <name type="primary">RPO132</name>
    <name type="ordered locus">EVM127</name>
</gene>
<keyword id="KW-0240">DNA-directed RNA polymerase</keyword>
<keyword id="KW-0479">Metal-binding</keyword>
<keyword id="KW-0548">Nucleotidyltransferase</keyword>
<keyword id="KW-0804">Transcription</keyword>
<keyword id="KW-0808">Transferase</keyword>
<keyword id="KW-0946">Virion</keyword>
<organism>
    <name type="scientific">Ectromelia virus (strain Moscow)</name>
    <name type="common">ECTV</name>
    <name type="synonym">Mousepox virus</name>
    <dbReference type="NCBI Taxonomy" id="265874"/>
    <lineage>
        <taxon>Viruses</taxon>
        <taxon>Varidnaviria</taxon>
        <taxon>Bamfordvirae</taxon>
        <taxon>Nucleocytoviricota</taxon>
        <taxon>Pokkesviricetes</taxon>
        <taxon>Chitovirales</taxon>
        <taxon>Poxviridae</taxon>
        <taxon>Chordopoxvirinae</taxon>
        <taxon>Orthopoxvirus</taxon>
        <taxon>Ectromelia virus</taxon>
    </lineage>
</organism>
<sequence>MKKNTDSEMDQRLGYKFLVPDPKAGVFYRPLHFQYVSYSNFILHRLHEILTVKRPLLSFKNNTERIMIEISNVKVTPPDYSPIIASIKGKSYDALATFTVNIFKEVMTKEGISITKISSYEGKDSHLIKIPLLIGYGNKNPLDTAKYLVPNVIGGVFINKQSVEKVGINLVEKITTWPKFRVVKPNSFTFSFSSVSPPNVLPTRYRHYKISLDISQLEASNISSTKTFITVNIVLLSQYLSRVSLEFIRRSLSYDMPPEVVYLVNAIIDSAKRITESITDFNIDTYINDLVEAEHIKQKSQLTINEFKYEMLHNFLPHMNYTPDQLKGFYMISLLRKFLYCIYHTSRYPDRDSMVCHRILTYGKYFETLAHDELENYIGNIRNDIMNNHKNRGTYAVNIHVLTTPGLNHAFSSLLSGKFKKSDGSYRTHPHYSWMQNISIPRSVGFYPDQVKISKMFSVRKYHPSQYLYFCSSDVPERGPQVGLVSQLSVLSSITNILTSEYLDLEKKICEYIRSYYKDDISYFETGFPITIENALVASLNPNMICDFVTDFRRRKRMGFFGNLEVGITLVRDHMNEIRINIGAGRLVRPFLVVDNGELMMDVCQELESRLDDMTFSDIQKEFPHVIEMVDIEQFTFSNVCESVQKFRMMSKDERKQYDLCDFPAEFRDGYVASSLVGINHNSGPRAILGCAQAKQAISCLSSDIRNKIDNGIHLMYPERPIVISKALETSKIAANCFGQHVTIALMSYKGINQEDGIIIKKQFIQRGGLDIVTAKKHQVEIPLENFNNKERDRSNAYSKLESNGLVRLNAFLESGDAMARNISSRTLEDDFARDNQISFDVSEKYTDMYKSRVERVQVELTDKVKVRVLTMKERRPILGDKFTTRTSQKGTVAYIADETELPYDENGITPDVIINSTSIFSRKTISMLIEVILTAAYSAKPYNNNGENRPVCFPSSNETSIDTYMQFAKQCYEHSNPQLTDDELSDKVFCEKILYDPETDKPYASKVFFGPIYYLRLRHLTQDKATVRCRGKKTKLIRQANEGRKRGGGIKFGEMERDCLIAHGAANTITEVLKDSEEDYQDVYICENCGDIAAQIKGINTCLRCSKLNLSPLLTKIDTTHVSKVFLTQMNARGVKVKLDFERRPPSFYKQLDKVDLKPSFLK</sequence>
<name>RP132_ECTVM</name>
<comment type="function">
    <text evidence="1">Part of the DNA-dependent RNA polymerase which catalyzes the transcription of viral DNA into RNA using the four ribonucleoside triphosphates as substrates. Responsible for the transcription of early, intermediate and late genes. DNA-dependent RNA polymerase associates with the early transcription factor (ETF), itself composed of D6 and A7, thereby allowing the early genes transcription. Late transcription, and probably also intermediate transcription, require newly synthesized RNA polymerase (By similarity).</text>
</comment>
<comment type="catalytic activity">
    <reaction>
        <text>RNA(n) + a ribonucleoside 5'-triphosphate = RNA(n+1) + diphosphate</text>
        <dbReference type="Rhea" id="RHEA:21248"/>
        <dbReference type="Rhea" id="RHEA-COMP:14527"/>
        <dbReference type="Rhea" id="RHEA-COMP:17342"/>
        <dbReference type="ChEBI" id="CHEBI:33019"/>
        <dbReference type="ChEBI" id="CHEBI:61557"/>
        <dbReference type="ChEBI" id="CHEBI:140395"/>
        <dbReference type="EC" id="2.7.7.6"/>
    </reaction>
</comment>
<comment type="subunit">
    <text evidence="1">The DNA-dependent RNA polymerase used for intermediate and late genes expression consists of eight subunits (147) kDa, (133) kDa, (35) kDa, (30) kDa, (22) kDa, (19) kDa, (18) kDa and (7) kDa totalling more than 500 kDa in mass. The same holoenzyme, with the addition of the transcription-specificity factor RAP94, is used for early gene expression (By similarity).</text>
</comment>
<comment type="subcellular location">
    <subcellularLocation>
        <location evidence="1">Virion</location>
    </subcellularLocation>
    <text evidence="1">All the enzymes and other proteins required to synthesize early mRNAs are packaged within the virion core along with the DNA genome. This is necessary because viral early mRNAs are synthesized within minutes after virus entry into the cell and are extruded through pores in the core particle (By similarity).</text>
</comment>
<comment type="similarity">
    <text evidence="2">Belongs to the RNA polymerase beta chain family.</text>
</comment>
<protein>
    <recommendedName>
        <fullName>DNA-directed RNA polymerase 132 kDa polypeptide</fullName>
        <ecNumber>2.7.7.6</ecNumber>
    </recommendedName>
</protein>
<dbReference type="EC" id="2.7.7.6"/>
<dbReference type="EMBL" id="AF012825">
    <property type="protein sequence ID" value="AAM92432.1"/>
    <property type="molecule type" value="Genomic_DNA"/>
</dbReference>
<dbReference type="RefSeq" id="NP_671646.1">
    <property type="nucleotide sequence ID" value="NC_004105.1"/>
</dbReference>
<dbReference type="SMR" id="Q8JL90"/>
<dbReference type="GeneID" id="951543"/>
<dbReference type="KEGG" id="vg:951543"/>
<dbReference type="Proteomes" id="UP000172110">
    <property type="component" value="Segment"/>
</dbReference>
<dbReference type="GO" id="GO:0000428">
    <property type="term" value="C:DNA-directed RNA polymerase complex"/>
    <property type="evidence" value="ECO:0007669"/>
    <property type="project" value="UniProtKB-KW"/>
</dbReference>
<dbReference type="GO" id="GO:0044423">
    <property type="term" value="C:virion component"/>
    <property type="evidence" value="ECO:0007669"/>
    <property type="project" value="UniProtKB-KW"/>
</dbReference>
<dbReference type="GO" id="GO:0003677">
    <property type="term" value="F:DNA binding"/>
    <property type="evidence" value="ECO:0007669"/>
    <property type="project" value="InterPro"/>
</dbReference>
<dbReference type="GO" id="GO:0003899">
    <property type="term" value="F:DNA-directed RNA polymerase activity"/>
    <property type="evidence" value="ECO:0007669"/>
    <property type="project" value="UniProtKB-EC"/>
</dbReference>
<dbReference type="GO" id="GO:0046872">
    <property type="term" value="F:metal ion binding"/>
    <property type="evidence" value="ECO:0007669"/>
    <property type="project" value="UniProtKB-KW"/>
</dbReference>
<dbReference type="GO" id="GO:0032549">
    <property type="term" value="F:ribonucleoside binding"/>
    <property type="evidence" value="ECO:0007669"/>
    <property type="project" value="InterPro"/>
</dbReference>
<dbReference type="GO" id="GO:0006351">
    <property type="term" value="P:DNA-templated transcription"/>
    <property type="evidence" value="ECO:0007669"/>
    <property type="project" value="InterPro"/>
</dbReference>
<dbReference type="Gene3D" id="2.40.50.150">
    <property type="match status" value="1"/>
</dbReference>
<dbReference type="Gene3D" id="3.90.1100.10">
    <property type="match status" value="2"/>
</dbReference>
<dbReference type="Gene3D" id="2.40.270.10">
    <property type="entry name" value="DNA-directed RNA polymerase, subunit 2, domain 6"/>
    <property type="match status" value="1"/>
</dbReference>
<dbReference type="Gene3D" id="3.90.1800.10">
    <property type="entry name" value="RNA polymerase alpha subunit dimerisation domain"/>
    <property type="match status" value="1"/>
</dbReference>
<dbReference type="InterPro" id="IPR015712">
    <property type="entry name" value="DNA-dir_RNA_pol_su2"/>
</dbReference>
<dbReference type="InterPro" id="IPR007120">
    <property type="entry name" value="DNA-dir_RNAP_su2_dom"/>
</dbReference>
<dbReference type="InterPro" id="IPR037033">
    <property type="entry name" value="DNA-dir_RNAP_su2_hyb_sf"/>
</dbReference>
<dbReference type="InterPro" id="IPR024390">
    <property type="entry name" value="RNA_pol_132_poxvirus"/>
</dbReference>
<dbReference type="InterPro" id="IPR007121">
    <property type="entry name" value="RNA_pol_bsu_CS"/>
</dbReference>
<dbReference type="InterPro" id="IPR007645">
    <property type="entry name" value="RNA_pol_Rpb2_3"/>
</dbReference>
<dbReference type="InterPro" id="IPR007647">
    <property type="entry name" value="RNA_pol_Rpb2_5"/>
</dbReference>
<dbReference type="InterPro" id="IPR007641">
    <property type="entry name" value="RNA_pol_Rpb2_7"/>
</dbReference>
<dbReference type="InterPro" id="IPR014724">
    <property type="entry name" value="RNA_pol_RPB2_OB-fold"/>
</dbReference>
<dbReference type="PANTHER" id="PTHR20856">
    <property type="entry name" value="DNA-DIRECTED RNA POLYMERASE I SUBUNIT 2"/>
    <property type="match status" value="1"/>
</dbReference>
<dbReference type="Pfam" id="PF04565">
    <property type="entry name" value="RNA_pol_Rpb2_3"/>
    <property type="match status" value="1"/>
</dbReference>
<dbReference type="Pfam" id="PF04567">
    <property type="entry name" value="RNA_pol_Rpb2_5"/>
    <property type="match status" value="1"/>
</dbReference>
<dbReference type="Pfam" id="PF00562">
    <property type="entry name" value="RNA_pol_Rpb2_6"/>
    <property type="match status" value="1"/>
</dbReference>
<dbReference type="Pfam" id="PF04560">
    <property type="entry name" value="RNA_pol_Rpb2_7"/>
    <property type="match status" value="1"/>
</dbReference>
<dbReference type="Pfam" id="PF12415">
    <property type="entry name" value="rpo132"/>
    <property type="match status" value="1"/>
</dbReference>
<dbReference type="SUPFAM" id="SSF64484">
    <property type="entry name" value="beta and beta-prime subunits of DNA dependent RNA-polymerase"/>
    <property type="match status" value="1"/>
</dbReference>
<dbReference type="PROSITE" id="PS01166">
    <property type="entry name" value="RNA_POL_BETA"/>
    <property type="match status" value="1"/>
</dbReference>
<evidence type="ECO:0000250" key="1"/>
<evidence type="ECO:0000305" key="2"/>